<protein>
    <recommendedName>
        <fullName>Stage II sporulation protein SA</fullName>
    </recommendedName>
    <alternativeName>
        <fullName>Killer protein SpoIISA</fullName>
    </alternativeName>
    <alternativeName>
        <fullName>Toxin SpoIISA</fullName>
    </alternativeName>
</protein>
<feature type="chain" id="PRO_0000415543" description="Stage II sporulation protein SA">
    <location>
        <begin position="1"/>
        <end position="248"/>
    </location>
</feature>
<feature type="transmembrane region" description="Helical" evidence="1">
    <location>
        <begin position="5"/>
        <end position="25"/>
    </location>
</feature>
<feature type="transmembrane region" description="Helical" evidence="1">
    <location>
        <begin position="46"/>
        <end position="66"/>
    </location>
</feature>
<feature type="transmembrane region" description="Helical" evidence="1">
    <location>
        <begin position="69"/>
        <end position="89"/>
    </location>
</feature>
<dbReference type="EMBL" id="AE016879">
    <property type="protein sequence ID" value="AAP26351.1"/>
    <property type="molecule type" value="Genomic_DNA"/>
</dbReference>
<dbReference type="EMBL" id="AE017334">
    <property type="protein sequence ID" value="AAT31603.1"/>
    <property type="molecule type" value="Genomic_DNA"/>
</dbReference>
<dbReference type="RefSeq" id="NP_844865.1">
    <property type="nucleotide sequence ID" value="NC_003997.3"/>
</dbReference>
<dbReference type="STRING" id="261594.GBAA_2490"/>
<dbReference type="DNASU" id="1084806"/>
<dbReference type="KEGG" id="ban:BA_2490"/>
<dbReference type="KEGG" id="bar:GBAA_2490"/>
<dbReference type="PATRIC" id="fig|198094.11.peg.2462"/>
<dbReference type="eggNOG" id="ENOG5033N7Q">
    <property type="taxonomic scope" value="Bacteria"/>
</dbReference>
<dbReference type="HOGENOM" id="CLU_1127307_0_0_9"/>
<dbReference type="Proteomes" id="UP000000427">
    <property type="component" value="Chromosome"/>
</dbReference>
<dbReference type="Proteomes" id="UP000000594">
    <property type="component" value="Chromosome"/>
</dbReference>
<dbReference type="GO" id="GO:0005886">
    <property type="term" value="C:plasma membrane"/>
    <property type="evidence" value="ECO:0007669"/>
    <property type="project" value="UniProtKB-SubCell"/>
</dbReference>
<dbReference type="GO" id="GO:0030435">
    <property type="term" value="P:sporulation resulting in formation of a cellular spore"/>
    <property type="evidence" value="ECO:0007669"/>
    <property type="project" value="UniProtKB-KW"/>
</dbReference>
<dbReference type="InterPro" id="IPR025940">
    <property type="entry name" value="SpoIISA_toxin"/>
</dbReference>
<dbReference type="Pfam" id="PF14171">
    <property type="entry name" value="SpoIISA_toxin"/>
    <property type="match status" value="1"/>
</dbReference>
<reference key="1">
    <citation type="journal article" date="2003" name="Nature">
        <title>The genome sequence of Bacillus anthracis Ames and comparison to closely related bacteria.</title>
        <authorList>
            <person name="Read T.D."/>
            <person name="Peterson S.N."/>
            <person name="Tourasse N.J."/>
            <person name="Baillie L.W."/>
            <person name="Paulsen I.T."/>
            <person name="Nelson K.E."/>
            <person name="Tettelin H."/>
            <person name="Fouts D.E."/>
            <person name="Eisen J.A."/>
            <person name="Gill S.R."/>
            <person name="Holtzapple E.K."/>
            <person name="Okstad O.A."/>
            <person name="Helgason E."/>
            <person name="Rilstone J."/>
            <person name="Wu M."/>
            <person name="Kolonay J.F."/>
            <person name="Beanan M.J."/>
            <person name="Dodson R.J."/>
            <person name="Brinkac L.M."/>
            <person name="Gwinn M.L."/>
            <person name="DeBoy R.T."/>
            <person name="Madpu R."/>
            <person name="Daugherty S.C."/>
            <person name="Durkin A.S."/>
            <person name="Haft D.H."/>
            <person name="Nelson W.C."/>
            <person name="Peterson J.D."/>
            <person name="Pop M."/>
            <person name="Khouri H.M."/>
            <person name="Radune D."/>
            <person name="Benton J.L."/>
            <person name="Mahamoud Y."/>
            <person name="Jiang L."/>
            <person name="Hance I.R."/>
            <person name="Weidman J.F."/>
            <person name="Berry K.J."/>
            <person name="Plaut R.D."/>
            <person name="Wolf A.M."/>
            <person name="Watkins K.L."/>
            <person name="Nierman W.C."/>
            <person name="Hazen A."/>
            <person name="Cline R.T."/>
            <person name="Redmond C."/>
            <person name="Thwaite J.E."/>
            <person name="White O."/>
            <person name="Salzberg S.L."/>
            <person name="Thomason B."/>
            <person name="Friedlander A.M."/>
            <person name="Koehler T.M."/>
            <person name="Hanna P.C."/>
            <person name="Kolstoe A.-B."/>
            <person name="Fraser C.M."/>
        </authorList>
    </citation>
    <scope>NUCLEOTIDE SEQUENCE [LARGE SCALE GENOMIC DNA]</scope>
    <source>
        <strain>Ames / isolate Porton</strain>
    </source>
</reference>
<reference key="2">
    <citation type="journal article" date="2009" name="J. Bacteriol.">
        <title>The complete genome sequence of Bacillus anthracis Ames 'Ancestor'.</title>
        <authorList>
            <person name="Ravel J."/>
            <person name="Jiang L."/>
            <person name="Stanley S.T."/>
            <person name="Wilson M.R."/>
            <person name="Decker R.S."/>
            <person name="Read T.D."/>
            <person name="Worsham P."/>
            <person name="Keim P.S."/>
            <person name="Salzberg S.L."/>
            <person name="Fraser-Liggett C.M."/>
            <person name="Rasko D.A."/>
        </authorList>
    </citation>
    <scope>NUCLEOTIDE SEQUENCE [LARGE SCALE GENOMIC DNA]</scope>
    <source>
        <strain>Ames ancestor</strain>
    </source>
</reference>
<reference key="3">
    <citation type="journal article" date="2008" name="FEMS Microbiol. Lett.">
        <title>Expression of functional Bacillus SpoIISAB toxin-antitoxin modules in Escherichia coli.</title>
        <authorList>
            <person name="Florek P."/>
            <person name="Muchova K."/>
            <person name="Pavelcikova P."/>
            <person name="Barak I."/>
        </authorList>
    </citation>
    <scope>FUNCTION AS A TOXIN</scope>
    <scope>EXPRESSION IN E.COLI</scope>
    <source>
        <strain>Ames / isolate Porton</strain>
    </source>
</reference>
<comment type="function">
    <text evidence="2">Toxic component of a type II toxin-antitoxin (TA) system. Upon expression in E.coli growth ceases.</text>
</comment>
<comment type="subunit">
    <text>Probably forms a complex with SpoIISB in which SpoIISB neutralizes the toxic activity.</text>
</comment>
<comment type="subcellular location">
    <subcellularLocation>
        <location evidence="3">Cell membrane</location>
        <topology evidence="3">Multi-pass membrane protein</topology>
    </subcellularLocation>
</comment>
<comment type="similarity">
    <text evidence="3">Belongs to the SpoIISA toxin family.</text>
</comment>
<accession>Q81QD6</accession>
<accession>E9QWT4</accession>
<accession>Q6KSL3</accession>
<name>SP2SA_BACAN</name>
<gene>
    <name type="primary">spoIISA</name>
    <name type="ordered locus">BA_2490</name>
    <name type="ordered locus">GBAA_2490</name>
</gene>
<organism>
    <name type="scientific">Bacillus anthracis</name>
    <dbReference type="NCBI Taxonomy" id="1392"/>
    <lineage>
        <taxon>Bacteria</taxon>
        <taxon>Bacillati</taxon>
        <taxon>Bacillota</taxon>
        <taxon>Bacilli</taxon>
        <taxon>Bacillales</taxon>
        <taxon>Bacillaceae</taxon>
        <taxon>Bacillus</taxon>
        <taxon>Bacillus cereus group</taxon>
    </lineage>
</organism>
<keyword id="KW-1003">Cell membrane</keyword>
<keyword id="KW-0472">Membrane</keyword>
<keyword id="KW-1185">Reference proteome</keyword>
<keyword id="KW-0749">Sporulation</keyword>
<keyword id="KW-1277">Toxin-antitoxin system</keyword>
<keyword id="KW-0812">Transmembrane</keyword>
<keyword id="KW-1133">Transmembrane helix</keyword>
<sequence length="248" mass="28704">MSLVISNIRIGLFILAIVFLVLVFFYWRNEELYEEKKQRIRKTWYGLFIVSVTVYFMIKGIDLTLWKNLLMFTAMVIFVDIAFILTPNISEIWGAKFSDIGKTVQSIKRSLIASKARGEIYTTIIQNVNPAVFGTMEWHTEEEYTKSLNAFLDSYGEKIGAKIVVFEAAKELNTNFRGIRSQFSTIIPLEYIEQLNEQRAVQVENVGIIPAKIVSDVFIVIDGKKNNLQDRDFENVYNLTIHHSYFSK</sequence>
<proteinExistence type="evidence at protein level"/>
<evidence type="ECO:0000255" key="1"/>
<evidence type="ECO:0000269" key="2">
    <source>
    </source>
</evidence>
<evidence type="ECO:0000305" key="3"/>